<dbReference type="EMBL" id="AY848689">
    <property type="protein sequence ID" value="AAX45913.1"/>
    <property type="molecule type" value="Genomic_DNA"/>
</dbReference>
<dbReference type="PIR" id="D40477">
    <property type="entry name" value="WMBPQ2"/>
</dbReference>
<dbReference type="RefSeq" id="NP_040684.1">
    <property type="nucleotide sequence ID" value="NC_001421.2"/>
</dbReference>
<dbReference type="RefSeq" id="YP_009639958.1">
    <property type="nucleotide sequence ID" value="NC_001421.2"/>
</dbReference>
<dbReference type="PDB" id="1N7U">
    <property type="method" value="X-ray"/>
    <property type="resolution" value="2.40 A"/>
    <property type="chains" value="A=2-555"/>
</dbReference>
<dbReference type="PDB" id="1N7V">
    <property type="method" value="X-ray"/>
    <property type="resolution" value="2.20 A"/>
    <property type="chains" value="A=2-556"/>
</dbReference>
<dbReference type="PDBsum" id="1N7U"/>
<dbReference type="PDBsum" id="1N7V"/>
<dbReference type="SMR" id="P27378"/>
<dbReference type="GeneID" id="1260937"/>
<dbReference type="OrthoDB" id="29517at10239"/>
<dbReference type="EvolutionaryTrace" id="P27378"/>
<dbReference type="Proteomes" id="UP000002143">
    <property type="component" value="Segment"/>
</dbReference>
<dbReference type="GO" id="GO:0044423">
    <property type="term" value="C:virion component"/>
    <property type="evidence" value="ECO:0007669"/>
    <property type="project" value="UniProtKB-KW"/>
</dbReference>
<dbReference type="GO" id="GO:0046718">
    <property type="term" value="P:symbiont entry into host cell"/>
    <property type="evidence" value="ECO:0007669"/>
    <property type="project" value="UniProtKB-KW"/>
</dbReference>
<dbReference type="GO" id="GO:0019062">
    <property type="term" value="P:virion attachment to host cell"/>
    <property type="evidence" value="ECO:0007669"/>
    <property type="project" value="UniProtKB-KW"/>
</dbReference>
<dbReference type="Gene3D" id="2.105.10.10">
    <property type="entry name" value="Pseudo beta propeller"/>
    <property type="match status" value="2"/>
</dbReference>
<dbReference type="Gene3D" id="2.70.250.10">
    <property type="entry name" value="receptor-binding protein prd1-p2, domain 3"/>
    <property type="match status" value="1"/>
</dbReference>
<dbReference type="InterPro" id="IPR036325">
    <property type="entry name" value="P2_sf"/>
</dbReference>
<dbReference type="InterPro" id="IPR015297">
    <property type="entry name" value="Phage_PRD1_P2"/>
</dbReference>
<dbReference type="InterPro" id="IPR015948">
    <property type="entry name" value="Phage_PRD1_P2_C"/>
</dbReference>
<dbReference type="InterPro" id="IPR015949">
    <property type="entry name" value="Phage_PRD1_P2_N"/>
</dbReference>
<dbReference type="Pfam" id="PF09214">
    <property type="entry name" value="Prd1-P2"/>
    <property type="match status" value="1"/>
</dbReference>
<dbReference type="SUPFAM" id="SSF89428">
    <property type="entry name" value="Adsorption protein p2"/>
    <property type="match status" value="1"/>
</dbReference>
<reference key="1">
    <citation type="journal article" date="1991" name="Virology">
        <title>Genome organization of membrane-containing bacteriophage PRD1.</title>
        <authorList>
            <person name="Bamford J.K.H."/>
            <person name="Haenninen A.-L."/>
            <person name="Pakula T.M."/>
            <person name="Ojala P.M."/>
            <person name="Kalkkinen N."/>
            <person name="Frilander M."/>
            <person name="Bamford D.H."/>
        </authorList>
    </citation>
    <scope>NUCLEOTIDE SEQUENCE [GENOMIC DNA]</scope>
    <scope>PROTEIN SEQUENCE OF 2-10</scope>
</reference>
<reference key="2">
    <citation type="journal article" date="2005" name="J. Mol. Biol.">
        <title>A snapshot of viral evolution from genome analysis of the tectiviridae family.</title>
        <authorList>
            <person name="Saren A.M."/>
            <person name="Ravantti J.J."/>
            <person name="Benson S.D."/>
            <person name="Burnett R.M."/>
            <person name="Paulin L."/>
            <person name="Bamford D.H."/>
            <person name="Bamford J.K.H."/>
        </authorList>
    </citation>
    <scope>NUCLEOTIDE SEQUENCE [GENOMIC DNA]</scope>
</reference>
<reference key="3">
    <citation type="journal article" date="2001" name="J. Biol. Chem.">
        <title>Solution structure of bacteriophage PRD1 vertex complex.</title>
        <authorList>
            <person name="Sokolova A."/>
            <person name="Malfois M."/>
            <person name="Caldentey J."/>
            <person name="Svergun D.I."/>
            <person name="Koch M.H."/>
            <person name="Bamford D.H."/>
            <person name="Tuma R."/>
        </authorList>
    </citation>
    <scope>FUNCTION</scope>
</reference>
<reference key="4">
    <citation type="journal article" date="2000" name="J. Struct. Biol.">
        <title>Crystallization and preliminary X-ray analysis of receptor-binding protein P2 of bacteriophage PRD1.</title>
        <authorList>
            <person name="Xu L."/>
            <person name="Butcher S.J."/>
            <person name="Benson S.D."/>
            <person name="Bamford D.H."/>
            <person name="Burnett R.M."/>
        </authorList>
    </citation>
    <scope>X-RAY CRYSTALLOGRAPHY (2.4 ANGSTROMS)</scope>
</reference>
<reference key="5">
    <citation type="journal article" date="2003" name="Structure">
        <title>The receptor binding protein P2 of PRD1, a virus targeting antibiotic-resistant bacteria, has a novel fold suggesting multiple functions.</title>
        <authorList>
            <person name="Xu L."/>
            <person name="Benson S.D."/>
            <person name="Butcher S.J."/>
            <person name="Bamford D.H."/>
            <person name="Burnett R.M."/>
        </authorList>
    </citation>
    <scope>X-RAY CRYSTALLOGRAPHY (2.2 ANGSTROMS)</scope>
</reference>
<organismHost>
    <name type="scientific">Acinetobacter calcoaceticus</name>
    <dbReference type="NCBI Taxonomy" id="471"/>
</organismHost>
<organismHost>
    <name type="scientific">Escherichia coli</name>
    <dbReference type="NCBI Taxonomy" id="562"/>
</organismHost>
<organismHost>
    <name type="scientific">Proteus mirabilis</name>
    <dbReference type="NCBI Taxonomy" id="584"/>
</organismHost>
<organismHost>
    <name type="scientific">Pseudomonas aeruginosa</name>
    <dbReference type="NCBI Taxonomy" id="287"/>
</organismHost>
<organismHost>
    <name type="scientific">Pseudomonas fluorescens</name>
    <dbReference type="NCBI Taxonomy" id="294"/>
</organismHost>
<organismHost>
    <name type="scientific">Pseudomonas putida</name>
    <name type="common">Arthrobacter siderocapsulatus</name>
    <dbReference type="NCBI Taxonomy" id="303"/>
</organismHost>
<organismHost>
    <name type="scientific">Salmonella typhimurium</name>
    <dbReference type="NCBI Taxonomy" id="90371"/>
</organismHost>
<organismHost>
    <name type="scientific">Vibrio cholerae</name>
    <dbReference type="NCBI Taxonomy" id="666"/>
</organismHost>
<feature type="initiator methionine" description="Removed; by host" evidence="2">
    <location>
        <position position="1"/>
    </location>
</feature>
<feature type="chain" id="PRO_0000165349" description="Adsorption protein P2">
    <location>
        <begin position="2"/>
        <end position="591"/>
    </location>
</feature>
<feature type="disulfide bond">
    <location>
        <begin position="254"/>
        <end position="277"/>
    </location>
</feature>
<feature type="strand" evidence="4">
    <location>
        <begin position="3"/>
        <end position="6"/>
    </location>
</feature>
<feature type="strand" evidence="4">
    <location>
        <begin position="8"/>
        <end position="11"/>
    </location>
</feature>
<feature type="strand" evidence="4">
    <location>
        <begin position="14"/>
        <end position="20"/>
    </location>
</feature>
<feature type="turn" evidence="4">
    <location>
        <begin position="28"/>
        <end position="30"/>
    </location>
</feature>
<feature type="strand" evidence="4">
    <location>
        <begin position="33"/>
        <end position="35"/>
    </location>
</feature>
<feature type="helix" evidence="4">
    <location>
        <begin position="41"/>
        <end position="43"/>
    </location>
</feature>
<feature type="strand" evidence="4">
    <location>
        <begin position="48"/>
        <end position="57"/>
    </location>
</feature>
<feature type="strand" evidence="4">
    <location>
        <begin position="63"/>
        <end position="66"/>
    </location>
</feature>
<feature type="strand" evidence="4">
    <location>
        <begin position="86"/>
        <end position="88"/>
    </location>
</feature>
<feature type="helix" evidence="4">
    <location>
        <begin position="93"/>
        <end position="103"/>
    </location>
</feature>
<feature type="helix" evidence="4">
    <location>
        <begin position="118"/>
        <end position="122"/>
    </location>
</feature>
<feature type="helix" evidence="4">
    <location>
        <begin position="123"/>
        <end position="125"/>
    </location>
</feature>
<feature type="strand" evidence="4">
    <location>
        <begin position="135"/>
        <end position="138"/>
    </location>
</feature>
<feature type="strand" evidence="4">
    <location>
        <begin position="141"/>
        <end position="154"/>
    </location>
</feature>
<feature type="strand" evidence="4">
    <location>
        <begin position="159"/>
        <end position="163"/>
    </location>
</feature>
<feature type="turn" evidence="4">
    <location>
        <begin position="165"/>
        <end position="167"/>
    </location>
</feature>
<feature type="strand" evidence="4">
    <location>
        <begin position="170"/>
        <end position="173"/>
    </location>
</feature>
<feature type="strand" evidence="4">
    <location>
        <begin position="192"/>
        <end position="195"/>
    </location>
</feature>
<feature type="strand" evidence="4">
    <location>
        <begin position="197"/>
        <end position="200"/>
    </location>
</feature>
<feature type="turn" evidence="4">
    <location>
        <begin position="202"/>
        <end position="206"/>
    </location>
</feature>
<feature type="strand" evidence="4">
    <location>
        <begin position="210"/>
        <end position="215"/>
    </location>
</feature>
<feature type="helix" evidence="4">
    <location>
        <begin position="219"/>
        <end position="221"/>
    </location>
</feature>
<feature type="strand" evidence="4">
    <location>
        <begin position="223"/>
        <end position="239"/>
    </location>
</feature>
<feature type="strand" evidence="3">
    <location>
        <begin position="245"/>
        <end position="249"/>
    </location>
</feature>
<feature type="strand" evidence="3">
    <location>
        <begin position="259"/>
        <end position="261"/>
    </location>
</feature>
<feature type="strand" evidence="3">
    <location>
        <begin position="263"/>
        <end position="267"/>
    </location>
</feature>
<feature type="strand" evidence="4">
    <location>
        <begin position="284"/>
        <end position="287"/>
    </location>
</feature>
<feature type="strand" evidence="4">
    <location>
        <begin position="294"/>
        <end position="298"/>
    </location>
</feature>
<feature type="strand" evidence="4">
    <location>
        <begin position="301"/>
        <end position="320"/>
    </location>
</feature>
<feature type="strand" evidence="4">
    <location>
        <begin position="324"/>
        <end position="330"/>
    </location>
</feature>
<feature type="turn" evidence="4">
    <location>
        <begin position="333"/>
        <end position="335"/>
    </location>
</feature>
<feature type="strand" evidence="4">
    <location>
        <begin position="340"/>
        <end position="344"/>
    </location>
</feature>
<feature type="strand" evidence="4">
    <location>
        <begin position="348"/>
        <end position="352"/>
    </location>
</feature>
<feature type="strand" evidence="4">
    <location>
        <begin position="354"/>
        <end position="360"/>
    </location>
</feature>
<feature type="strand" evidence="4">
    <location>
        <begin position="362"/>
        <end position="384"/>
    </location>
</feature>
<feature type="strand" evidence="4">
    <location>
        <begin position="387"/>
        <end position="396"/>
    </location>
</feature>
<feature type="helix" evidence="4">
    <location>
        <begin position="398"/>
        <end position="400"/>
    </location>
</feature>
<feature type="helix" evidence="4">
    <location>
        <begin position="404"/>
        <end position="415"/>
    </location>
</feature>
<feature type="helix" evidence="3">
    <location>
        <begin position="420"/>
        <end position="422"/>
    </location>
</feature>
<feature type="strand" evidence="4">
    <location>
        <begin position="425"/>
        <end position="433"/>
    </location>
</feature>
<feature type="helix" evidence="4">
    <location>
        <begin position="434"/>
        <end position="438"/>
    </location>
</feature>
<feature type="turn" evidence="4">
    <location>
        <begin position="446"/>
        <end position="449"/>
    </location>
</feature>
<feature type="strand" evidence="4">
    <location>
        <begin position="451"/>
        <end position="454"/>
    </location>
</feature>
<feature type="strand" evidence="4">
    <location>
        <begin position="467"/>
        <end position="471"/>
    </location>
</feature>
<feature type="strand" evidence="4">
    <location>
        <begin position="474"/>
        <end position="480"/>
    </location>
</feature>
<feature type="strand" evidence="4">
    <location>
        <begin position="490"/>
        <end position="495"/>
    </location>
</feature>
<feature type="strand" evidence="4">
    <location>
        <begin position="501"/>
        <end position="505"/>
    </location>
</feature>
<feature type="helix" evidence="4">
    <location>
        <begin position="507"/>
        <end position="510"/>
    </location>
</feature>
<feature type="strand" evidence="4">
    <location>
        <begin position="513"/>
        <end position="515"/>
    </location>
</feature>
<feature type="strand" evidence="4">
    <location>
        <begin position="522"/>
        <end position="526"/>
    </location>
</feature>
<feature type="strand" evidence="4">
    <location>
        <begin position="529"/>
        <end position="534"/>
    </location>
</feature>
<feature type="strand" evidence="4">
    <location>
        <begin position="547"/>
        <end position="553"/>
    </location>
</feature>
<evidence type="ECO:0000269" key="1">
    <source>
    </source>
</evidence>
<evidence type="ECO:0000269" key="2">
    <source>
    </source>
</evidence>
<evidence type="ECO:0007829" key="3">
    <source>
        <dbReference type="PDB" id="1N7U"/>
    </source>
</evidence>
<evidence type="ECO:0007829" key="4">
    <source>
        <dbReference type="PDB" id="1N7V"/>
    </source>
</evidence>
<organism>
    <name type="scientific">Enterobacteria phage PRD1</name>
    <name type="common">Bacteriophage PRD1</name>
    <dbReference type="NCBI Taxonomy" id="10658"/>
    <lineage>
        <taxon>Viruses</taxon>
        <taxon>Varidnaviria</taxon>
        <taxon>Bamfordvirae</taxon>
        <taxon>Preplasmiviricota</taxon>
        <taxon>Tectiliviricetes</taxon>
        <taxon>Kalamavirales</taxon>
        <taxon>Tectiviridae</taxon>
        <taxon>Alphatectivirus</taxon>
        <taxon>Alphatectivirus PRD1</taxon>
    </lineage>
</organism>
<protein>
    <recommendedName>
        <fullName>Adsorption protein P2</fullName>
    </recommendedName>
    <alternativeName>
        <fullName>Protein P2</fullName>
    </alternativeName>
</protein>
<comment type="function">
    <text evidence="1">Adsorption protein. In association with P31 and trimeric P5, forms the spike complexes located at the 5-fold vertices of the capsid. Involved in recognition and attachment to the receptor on the surface of the host. Likely triggers the processes of vertex disassembly, membrane tube formation, and subsequent DNA injection. Essential for viral infectivity.</text>
</comment>
<comment type="subcellular location">
    <subcellularLocation>
        <location>Virion</location>
    </subcellularLocation>
</comment>
<name>P2_BPPRD</name>
<proteinExistence type="evidence at protein level"/>
<keyword id="KW-0002">3D-structure</keyword>
<keyword id="KW-0903">Direct protein sequencing</keyword>
<keyword id="KW-1015">Disulfide bond</keyword>
<keyword id="KW-0945">Host-virus interaction</keyword>
<keyword id="KW-1185">Reference proteome</keyword>
<keyword id="KW-1161">Viral attachment to host cell</keyword>
<keyword id="KW-0946">Virion</keyword>
<keyword id="KW-1160">Virus entry into host cell</keyword>
<sequence length="591" mass="63822">MANFNVPKLGVFPVAAVFDIDNVPEDSSATGSRWLPSIYQGGNYWGGGPQALHAQVSNFDSSNRLPYNPRTENNPAGNCAFAFNPFGQYISNISSAQSVHRRIYGIDLNDEPLFSPNAASITNGGNPTMSQDTGYHNIGPINTAYKAEIFRPVNPLPMSDTAPDPETLEPGQTEPLIKSDGVYSNSGIASFIFDRPVTEPNPNWPPLPPPVIPIIYPTPALGIGAAAAYGFGYQVTVYRWEEIPVEFIADPETCPAQPTTDKVIIRTTDLNPEGSPCAYEAGIILVRQTSNPMNAVAGRLVPYVEDIAVDIFLTGKFFTLNPPLRITNNYFADDEVKENTVTIGNYTTTLSSAYYAVYKTDGYGGATCFIASGGAGISALVQLQDNSVLDVLYYSLPLSLGGSKAAIDEWVANNCGLFPMSGGLDKTTLLEIPRRQLEAINPQDGPGQYDLFILDDSGAYASFSSFIGYPEAAYYVAGAATFMDVENPDEIIFILRNGAGWYACEIGDALKIADDEFDSVDYFAYRGGVMFIGSARYTEGGDPLPIKYRAIIPGLPRGRLPRVVLEYQAVGMSFIPCQTHCLGKGGIISKV</sequence>
<accession>P27378</accession>
<accession>Q3T4P2</accession>
<gene>
    <name type="primary">II</name>
</gene>